<feature type="chain" id="PRO_1000088799" description="Aspartate carbamoyltransferase catalytic subunit">
    <location>
        <begin position="1"/>
        <end position="311"/>
    </location>
</feature>
<feature type="binding site" evidence="1">
    <location>
        <position position="55"/>
    </location>
    <ligand>
        <name>carbamoyl phosphate</name>
        <dbReference type="ChEBI" id="CHEBI:58228"/>
    </ligand>
</feature>
<feature type="binding site" evidence="1">
    <location>
        <position position="56"/>
    </location>
    <ligand>
        <name>carbamoyl phosphate</name>
        <dbReference type="ChEBI" id="CHEBI:58228"/>
    </ligand>
</feature>
<feature type="binding site" evidence="1">
    <location>
        <position position="85"/>
    </location>
    <ligand>
        <name>L-aspartate</name>
        <dbReference type="ChEBI" id="CHEBI:29991"/>
    </ligand>
</feature>
<feature type="binding site" evidence="1">
    <location>
        <position position="106"/>
    </location>
    <ligand>
        <name>carbamoyl phosphate</name>
        <dbReference type="ChEBI" id="CHEBI:58228"/>
    </ligand>
</feature>
<feature type="binding site" evidence="1">
    <location>
        <position position="135"/>
    </location>
    <ligand>
        <name>carbamoyl phosphate</name>
        <dbReference type="ChEBI" id="CHEBI:58228"/>
    </ligand>
</feature>
<feature type="binding site" evidence="1">
    <location>
        <position position="138"/>
    </location>
    <ligand>
        <name>carbamoyl phosphate</name>
        <dbReference type="ChEBI" id="CHEBI:58228"/>
    </ligand>
</feature>
<feature type="binding site" evidence="1">
    <location>
        <position position="168"/>
    </location>
    <ligand>
        <name>L-aspartate</name>
        <dbReference type="ChEBI" id="CHEBI:29991"/>
    </ligand>
</feature>
<feature type="binding site" evidence="1">
    <location>
        <position position="230"/>
    </location>
    <ligand>
        <name>L-aspartate</name>
        <dbReference type="ChEBI" id="CHEBI:29991"/>
    </ligand>
</feature>
<feature type="binding site" evidence="1">
    <location>
        <position position="268"/>
    </location>
    <ligand>
        <name>carbamoyl phosphate</name>
        <dbReference type="ChEBI" id="CHEBI:58228"/>
    </ligand>
</feature>
<feature type="binding site" evidence="1">
    <location>
        <position position="269"/>
    </location>
    <ligand>
        <name>carbamoyl phosphate</name>
        <dbReference type="ChEBI" id="CHEBI:58228"/>
    </ligand>
</feature>
<gene>
    <name evidence="1" type="primary">pyrB</name>
    <name type="ordered locus">SNSL254_A4807</name>
</gene>
<dbReference type="EC" id="2.1.3.2" evidence="1"/>
<dbReference type="EMBL" id="CP001113">
    <property type="protein sequence ID" value="ACF62290.1"/>
    <property type="molecule type" value="Genomic_DNA"/>
</dbReference>
<dbReference type="RefSeq" id="WP_000013055.1">
    <property type="nucleotide sequence ID" value="NZ_CCMR01000003.1"/>
</dbReference>
<dbReference type="SMR" id="B4T3K6"/>
<dbReference type="KEGG" id="see:SNSL254_A4807"/>
<dbReference type="HOGENOM" id="CLU_043846_1_2_6"/>
<dbReference type="UniPathway" id="UPA00070">
    <property type="reaction ID" value="UER00116"/>
</dbReference>
<dbReference type="Proteomes" id="UP000008824">
    <property type="component" value="Chromosome"/>
</dbReference>
<dbReference type="GO" id="GO:0005829">
    <property type="term" value="C:cytosol"/>
    <property type="evidence" value="ECO:0007669"/>
    <property type="project" value="TreeGrafter"/>
</dbReference>
<dbReference type="GO" id="GO:0016597">
    <property type="term" value="F:amino acid binding"/>
    <property type="evidence" value="ECO:0007669"/>
    <property type="project" value="InterPro"/>
</dbReference>
<dbReference type="GO" id="GO:0004070">
    <property type="term" value="F:aspartate carbamoyltransferase activity"/>
    <property type="evidence" value="ECO:0007669"/>
    <property type="project" value="UniProtKB-UniRule"/>
</dbReference>
<dbReference type="GO" id="GO:0006207">
    <property type="term" value="P:'de novo' pyrimidine nucleobase biosynthetic process"/>
    <property type="evidence" value="ECO:0007669"/>
    <property type="project" value="InterPro"/>
</dbReference>
<dbReference type="GO" id="GO:0044205">
    <property type="term" value="P:'de novo' UMP biosynthetic process"/>
    <property type="evidence" value="ECO:0007669"/>
    <property type="project" value="UniProtKB-UniRule"/>
</dbReference>
<dbReference type="GO" id="GO:0006520">
    <property type="term" value="P:amino acid metabolic process"/>
    <property type="evidence" value="ECO:0007669"/>
    <property type="project" value="InterPro"/>
</dbReference>
<dbReference type="FunFam" id="3.40.50.1370:FF:000001">
    <property type="entry name" value="Aspartate carbamoyltransferase"/>
    <property type="match status" value="1"/>
</dbReference>
<dbReference type="FunFam" id="3.40.50.1370:FF:000002">
    <property type="entry name" value="Aspartate carbamoyltransferase 2"/>
    <property type="match status" value="1"/>
</dbReference>
<dbReference type="Gene3D" id="3.40.50.1370">
    <property type="entry name" value="Aspartate/ornithine carbamoyltransferase"/>
    <property type="match status" value="2"/>
</dbReference>
<dbReference type="HAMAP" id="MF_00001">
    <property type="entry name" value="Asp_carb_tr"/>
    <property type="match status" value="1"/>
</dbReference>
<dbReference type="InterPro" id="IPR006132">
    <property type="entry name" value="Asp/Orn_carbamoyltranf_P-bd"/>
</dbReference>
<dbReference type="InterPro" id="IPR006130">
    <property type="entry name" value="Asp/Orn_carbamoylTrfase"/>
</dbReference>
<dbReference type="InterPro" id="IPR036901">
    <property type="entry name" value="Asp/Orn_carbamoylTrfase_sf"/>
</dbReference>
<dbReference type="InterPro" id="IPR002082">
    <property type="entry name" value="Asp_carbamoyltransf"/>
</dbReference>
<dbReference type="InterPro" id="IPR006131">
    <property type="entry name" value="Asp_carbamoyltransf_Asp/Orn-bd"/>
</dbReference>
<dbReference type="NCBIfam" id="TIGR00670">
    <property type="entry name" value="asp_carb_tr"/>
    <property type="match status" value="1"/>
</dbReference>
<dbReference type="NCBIfam" id="NF002032">
    <property type="entry name" value="PRK00856.1"/>
    <property type="match status" value="1"/>
</dbReference>
<dbReference type="PANTHER" id="PTHR45753:SF6">
    <property type="entry name" value="ASPARTATE CARBAMOYLTRANSFERASE"/>
    <property type="match status" value="1"/>
</dbReference>
<dbReference type="PANTHER" id="PTHR45753">
    <property type="entry name" value="ORNITHINE CARBAMOYLTRANSFERASE, MITOCHONDRIAL"/>
    <property type="match status" value="1"/>
</dbReference>
<dbReference type="Pfam" id="PF00185">
    <property type="entry name" value="OTCace"/>
    <property type="match status" value="1"/>
</dbReference>
<dbReference type="Pfam" id="PF02729">
    <property type="entry name" value="OTCace_N"/>
    <property type="match status" value="1"/>
</dbReference>
<dbReference type="PRINTS" id="PR00100">
    <property type="entry name" value="AOTCASE"/>
</dbReference>
<dbReference type="PRINTS" id="PR00101">
    <property type="entry name" value="ATCASE"/>
</dbReference>
<dbReference type="SUPFAM" id="SSF53671">
    <property type="entry name" value="Aspartate/ornithine carbamoyltransferase"/>
    <property type="match status" value="1"/>
</dbReference>
<dbReference type="PROSITE" id="PS00097">
    <property type="entry name" value="CARBAMOYLTRANSFERASE"/>
    <property type="match status" value="1"/>
</dbReference>
<comment type="function">
    <text evidence="1">Catalyzes the condensation of carbamoyl phosphate and aspartate to form carbamoyl aspartate and inorganic phosphate, the committed step in the de novo pyrimidine nucleotide biosynthesis pathway.</text>
</comment>
<comment type="catalytic activity">
    <reaction evidence="1">
        <text>carbamoyl phosphate + L-aspartate = N-carbamoyl-L-aspartate + phosphate + H(+)</text>
        <dbReference type="Rhea" id="RHEA:20013"/>
        <dbReference type="ChEBI" id="CHEBI:15378"/>
        <dbReference type="ChEBI" id="CHEBI:29991"/>
        <dbReference type="ChEBI" id="CHEBI:32814"/>
        <dbReference type="ChEBI" id="CHEBI:43474"/>
        <dbReference type="ChEBI" id="CHEBI:58228"/>
        <dbReference type="EC" id="2.1.3.2"/>
    </reaction>
</comment>
<comment type="pathway">
    <text evidence="1">Pyrimidine metabolism; UMP biosynthesis via de novo pathway; (S)-dihydroorotate from bicarbonate: step 2/3.</text>
</comment>
<comment type="subunit">
    <text evidence="1">Heterododecamer (2C3:3R2) of six catalytic PyrB chains organized as two trimers (C3), and six regulatory PyrI chains organized as three dimers (R2).</text>
</comment>
<comment type="similarity">
    <text evidence="1">Belongs to the aspartate/ornithine carbamoyltransferase superfamily. ATCase family.</text>
</comment>
<evidence type="ECO:0000255" key="1">
    <source>
        <dbReference type="HAMAP-Rule" id="MF_00001"/>
    </source>
</evidence>
<keyword id="KW-0665">Pyrimidine biosynthesis</keyword>
<keyword id="KW-0808">Transferase</keyword>
<sequence>MANPLYQKHIISINDLSRDDLNLVLATAAKLKANPQPELLKHKVIASCFFEASTRTRLSFETSMHRLGASVVGFSDSANTSLGKKGETLADTISVISTYVDAIVMRHPQEGAARLATEFSGQVPVLNAGDGSNQHPTQTLLDLFTIQETQGRLDNLHIAMVGDLKYGRTVHSLTQALAKFSGNRFYFIAPDALAMPQYILDMLDEKGMAWSLHGSIEEVMADVDILYMTRVQKERLDPSEYANVKAQFVLRASDLNGARENMKVLHPLPRIDEITTDVDKTPHAWYFQQAGNGIFARQALLALVLNSELSL</sequence>
<reference key="1">
    <citation type="journal article" date="2011" name="J. Bacteriol.">
        <title>Comparative genomics of 28 Salmonella enterica isolates: evidence for CRISPR-mediated adaptive sublineage evolution.</title>
        <authorList>
            <person name="Fricke W.F."/>
            <person name="Mammel M.K."/>
            <person name="McDermott P.F."/>
            <person name="Tartera C."/>
            <person name="White D.G."/>
            <person name="Leclerc J.E."/>
            <person name="Ravel J."/>
            <person name="Cebula T.A."/>
        </authorList>
    </citation>
    <scope>NUCLEOTIDE SEQUENCE [LARGE SCALE GENOMIC DNA]</scope>
    <source>
        <strain>SL254</strain>
    </source>
</reference>
<name>PYRB_SALNS</name>
<protein>
    <recommendedName>
        <fullName evidence="1">Aspartate carbamoyltransferase catalytic subunit</fullName>
        <ecNumber evidence="1">2.1.3.2</ecNumber>
    </recommendedName>
    <alternativeName>
        <fullName evidence="1">Aspartate transcarbamylase</fullName>
        <shortName evidence="1">ATCase</shortName>
    </alternativeName>
</protein>
<accession>B4T3K6</accession>
<proteinExistence type="inferred from homology"/>
<organism>
    <name type="scientific">Salmonella newport (strain SL254)</name>
    <dbReference type="NCBI Taxonomy" id="423368"/>
    <lineage>
        <taxon>Bacteria</taxon>
        <taxon>Pseudomonadati</taxon>
        <taxon>Pseudomonadota</taxon>
        <taxon>Gammaproteobacteria</taxon>
        <taxon>Enterobacterales</taxon>
        <taxon>Enterobacteriaceae</taxon>
        <taxon>Salmonella</taxon>
    </lineage>
</organism>